<protein>
    <recommendedName>
        <fullName>Disintegrin and metalloproteinase domain-containing protein 10</fullName>
        <shortName>ADAM 10</shortName>
        <ecNumber evidence="1">3.4.24.81</ecNumber>
    </recommendedName>
    <alternativeName>
        <fullName>Kuzbanian protein homolog</fullName>
    </alternativeName>
    <alternativeName>
        <fullName>Mammalian disintegrin-metalloprotease</fullName>
    </alternativeName>
    <alternativeName>
        <fullName>Myelin-associated metalloproteinase</fullName>
    </alternativeName>
    <cdAntigenName>CD156c</cdAntigenName>
</protein>
<proteinExistence type="evidence at protein level"/>
<evidence type="ECO:0000250" key="1">
    <source>
        <dbReference type="UniProtKB" id="O14672"/>
    </source>
</evidence>
<evidence type="ECO:0000250" key="2">
    <source>
        <dbReference type="UniProtKB" id="O35598"/>
    </source>
</evidence>
<evidence type="ECO:0000250" key="3">
    <source>
        <dbReference type="UniProtKB" id="P03956"/>
    </source>
</evidence>
<evidence type="ECO:0000255" key="4"/>
<evidence type="ECO:0000255" key="5">
    <source>
        <dbReference type="PROSITE-ProRule" id="PRU00068"/>
    </source>
</evidence>
<evidence type="ECO:0000255" key="6">
    <source>
        <dbReference type="PROSITE-ProRule" id="PRU00276"/>
    </source>
</evidence>
<evidence type="ECO:0000256" key="7">
    <source>
        <dbReference type="SAM" id="MobiDB-lite"/>
    </source>
</evidence>
<evidence type="ECO:0000269" key="8">
    <source>
    </source>
</evidence>
<evidence type="ECO:0000269" key="9">
    <source>
    </source>
</evidence>
<evidence type="ECO:0000269" key="10">
    <source>
    </source>
</evidence>
<evidence type="ECO:0000269" key="11">
    <source>
    </source>
</evidence>
<evidence type="ECO:0000269" key="12">
    <source>
    </source>
</evidence>
<evidence type="ECO:0000305" key="13"/>
<evidence type="ECO:0007744" key="14">
    <source>
        <dbReference type="PDB" id="2AO7"/>
    </source>
</evidence>
<evidence type="ECO:0007744" key="15">
    <source>
        <dbReference type="PDB" id="5L0Q"/>
    </source>
</evidence>
<evidence type="ECO:0007829" key="16">
    <source>
        <dbReference type="PDB" id="5L0Q"/>
    </source>
</evidence>
<organism>
    <name type="scientific">Bos taurus</name>
    <name type="common">Bovine</name>
    <dbReference type="NCBI Taxonomy" id="9913"/>
    <lineage>
        <taxon>Eukaryota</taxon>
        <taxon>Metazoa</taxon>
        <taxon>Chordata</taxon>
        <taxon>Craniata</taxon>
        <taxon>Vertebrata</taxon>
        <taxon>Euteleostomi</taxon>
        <taxon>Mammalia</taxon>
        <taxon>Eutheria</taxon>
        <taxon>Laurasiatheria</taxon>
        <taxon>Artiodactyla</taxon>
        <taxon>Ruminantia</taxon>
        <taxon>Pecora</taxon>
        <taxon>Bovidae</taxon>
        <taxon>Bovinae</taxon>
        <taxon>Bos</taxon>
    </lineage>
</organism>
<gene>
    <name type="primary">ADAM10</name>
    <name type="synonym">MADM</name>
</gene>
<feature type="signal peptide" evidence="4">
    <location>
        <begin position="1"/>
        <end position="19"/>
    </location>
</feature>
<feature type="propeptide" id="PRO_0000029064" evidence="8 9">
    <location>
        <begin position="20"/>
        <end position="213"/>
    </location>
</feature>
<feature type="chain" id="PRO_0000029065" description="Disintegrin and metalloproteinase domain-containing protein 10">
    <location>
        <begin position="214"/>
        <end position="748"/>
    </location>
</feature>
<feature type="topological domain" description="Extracellular" evidence="4">
    <location>
        <begin position="20"/>
        <end position="672"/>
    </location>
</feature>
<feature type="transmembrane region" description="Helical" evidence="4">
    <location>
        <begin position="673"/>
        <end position="696"/>
    </location>
</feature>
<feature type="topological domain" description="Cytoplasmic" evidence="4">
    <location>
        <begin position="697"/>
        <end position="748"/>
    </location>
</feature>
<feature type="domain" description="Peptidase M12B" evidence="6">
    <location>
        <begin position="220"/>
        <end position="456"/>
    </location>
</feature>
<feature type="domain" description="Disintegrin" evidence="5">
    <location>
        <begin position="457"/>
        <end position="551"/>
    </location>
</feature>
<feature type="region of interest" description="Disordered" evidence="7">
    <location>
        <begin position="704"/>
        <end position="748"/>
    </location>
</feature>
<feature type="region of interest" description="Interaction with AP2A1, AP2A2 and AP2M1" evidence="2">
    <location>
        <begin position="734"/>
        <end position="748"/>
    </location>
</feature>
<feature type="short sequence motif" description="Cysteine switch">
    <location>
        <begin position="171"/>
        <end position="178"/>
    </location>
</feature>
<feature type="short sequence motif" description="SH3-binding" evidence="4">
    <location>
        <begin position="708"/>
        <end position="715"/>
    </location>
</feature>
<feature type="short sequence motif" description="SH3-binding" evidence="4">
    <location>
        <begin position="722"/>
        <end position="728"/>
    </location>
</feature>
<feature type="active site" evidence="8">
    <location>
        <position position="384"/>
    </location>
</feature>
<feature type="binding site" description="in inhibited form" evidence="3">
    <location>
        <position position="173"/>
    </location>
    <ligand>
        <name>Zn(2+)</name>
        <dbReference type="ChEBI" id="CHEBI:29105"/>
        <note>catalytic</note>
    </ligand>
</feature>
<feature type="binding site" evidence="1">
    <location>
        <position position="383"/>
    </location>
    <ligand>
        <name>Zn(2+)</name>
        <dbReference type="ChEBI" id="CHEBI:29105"/>
        <note>catalytic</note>
    </ligand>
</feature>
<feature type="binding site" evidence="1">
    <location>
        <position position="387"/>
    </location>
    <ligand>
        <name>Zn(2+)</name>
        <dbReference type="ChEBI" id="CHEBI:29105"/>
        <note>catalytic</note>
    </ligand>
</feature>
<feature type="binding site" evidence="1">
    <location>
        <position position="393"/>
    </location>
    <ligand>
        <name>Zn(2+)</name>
        <dbReference type="ChEBI" id="CHEBI:29105"/>
        <note>catalytic</note>
    </ligand>
</feature>
<feature type="site" description="Cleavage; by furin and PCSK7" evidence="9">
    <location>
        <begin position="213"/>
        <end position="214"/>
    </location>
</feature>
<feature type="modified residue" description="Phosphothreonine" evidence="1">
    <location>
        <position position="719"/>
    </location>
</feature>
<feature type="glycosylation site" description="N-linked (GlcNAc...) asparagine" evidence="4">
    <location>
        <position position="267"/>
    </location>
</feature>
<feature type="glycosylation site" description="N-linked (GlcNAc...) asparagine" evidence="4">
    <location>
        <position position="278"/>
    </location>
</feature>
<feature type="glycosylation site" description="N-linked (GlcNAc...) asparagine" evidence="4">
    <location>
        <position position="439"/>
    </location>
</feature>
<feature type="glycosylation site" description="N-linked (GlcNAc...) asparagine" evidence="15">
    <location>
        <position position="551"/>
    </location>
</feature>
<feature type="disulfide bond" evidence="1">
    <location>
        <begin position="344"/>
        <end position="451"/>
    </location>
</feature>
<feature type="disulfide bond" evidence="1">
    <location>
        <begin position="399"/>
        <end position="435"/>
    </location>
</feature>
<feature type="disulfide bond" evidence="12 15">
    <location>
        <begin position="460"/>
        <end position="495"/>
    </location>
</feature>
<feature type="disulfide bond" evidence="12 15">
    <location>
        <begin position="471"/>
        <end position="484"/>
    </location>
</feature>
<feature type="disulfide bond" evidence="12 15">
    <location>
        <begin position="473"/>
        <end position="479"/>
    </location>
</feature>
<feature type="disulfide bond" evidence="12 15">
    <location>
        <begin position="483"/>
        <end position="515"/>
    </location>
</feature>
<feature type="disulfide bond" evidence="10 12 14 15">
    <location>
        <begin position="503"/>
        <end position="511"/>
    </location>
</feature>
<feature type="disulfide bond" evidence="10 12 14 15">
    <location>
        <begin position="510"/>
        <end position="536"/>
    </location>
</feature>
<feature type="disulfide bond" evidence="10 12 14 15">
    <location>
        <begin position="524"/>
        <end position="543"/>
    </location>
</feature>
<feature type="disulfide bond" evidence="10 12 14 15">
    <location>
        <begin position="530"/>
        <end position="562"/>
    </location>
</feature>
<feature type="disulfide bond" evidence="10 12 14 15">
    <location>
        <begin position="555"/>
        <end position="567"/>
    </location>
</feature>
<feature type="disulfide bond" evidence="10 12 14 15">
    <location>
        <begin position="572"/>
        <end position="598"/>
    </location>
</feature>
<feature type="disulfide bond" evidence="10 12 14 15">
    <location>
        <begin position="580"/>
        <end position="607"/>
    </location>
</feature>
<feature type="disulfide bond" evidence="10 12 14 15">
    <location>
        <begin position="582"/>
        <end position="597"/>
    </location>
</feature>
<feature type="disulfide bond" evidence="10 12 14 15">
    <location>
        <begin position="594"/>
        <end position="639"/>
    </location>
</feature>
<feature type="disulfide bond" evidence="10 12 14 15">
    <location>
        <begin position="632"/>
        <end position="645"/>
    </location>
</feature>
<feature type="mutagenesis site" description="Abolishes furin cleavage site, leading to defects in pro." evidence="9">
    <original>RKKR</original>
    <variation>NAQA</variation>
    <location>
        <begin position="210"/>
        <end position="213"/>
    </location>
</feature>
<feature type="mutagenesis site" description="Decreased stimulated and constitutive secretion of APP." evidence="8">
    <original>E</original>
    <variation>A</variation>
    <location>
        <position position="384"/>
    </location>
</feature>
<feature type="mutagenesis site" description="Abrogates EFNA5 cleavage; when associated with Ala-578 and 579." evidence="10">
    <original>E</original>
    <variation>A</variation>
    <location>
        <position position="573"/>
    </location>
</feature>
<feature type="mutagenesis site" description="Abrogates EFNA5 cleavage; when associated with Ala-573 and 579." evidence="10">
    <original>E</original>
    <variation>A</variation>
    <location>
        <position position="578"/>
    </location>
</feature>
<feature type="mutagenesis site" description="Abrogates EFNA5 cleavage; when associated with Ala-573 and 578." evidence="10">
    <original>E</original>
    <variation>A</variation>
    <location>
        <position position="579"/>
    </location>
</feature>
<feature type="turn" evidence="16">
    <location>
        <begin position="476"/>
        <end position="478"/>
    </location>
</feature>
<feature type="strand" evidence="16">
    <location>
        <begin position="482"/>
        <end position="484"/>
    </location>
</feature>
<feature type="strand" evidence="16">
    <location>
        <begin position="487"/>
        <end position="489"/>
    </location>
</feature>
<feature type="turn" evidence="16">
    <location>
        <begin position="505"/>
        <end position="507"/>
    </location>
</feature>
<feature type="strand" evidence="16">
    <location>
        <begin position="523"/>
        <end position="525"/>
    </location>
</feature>
<feature type="strand" evidence="16">
    <location>
        <begin position="529"/>
        <end position="531"/>
    </location>
</feature>
<feature type="turn" evidence="16">
    <location>
        <begin position="556"/>
        <end position="559"/>
    </location>
</feature>
<feature type="strand" evidence="16">
    <location>
        <begin position="563"/>
        <end position="566"/>
    </location>
</feature>
<feature type="helix" evidence="16">
    <location>
        <begin position="571"/>
        <end position="574"/>
    </location>
</feature>
<feature type="strand" evidence="16">
    <location>
        <begin position="578"/>
        <end position="580"/>
    </location>
</feature>
<feature type="helix" evidence="16">
    <location>
        <begin position="591"/>
        <end position="594"/>
    </location>
</feature>
<feature type="strand" evidence="16">
    <location>
        <begin position="597"/>
        <end position="600"/>
    </location>
</feature>
<feature type="helix" evidence="16">
    <location>
        <begin position="604"/>
        <end position="606"/>
    </location>
</feature>
<feature type="helix" evidence="16">
    <location>
        <begin position="616"/>
        <end position="619"/>
    </location>
</feature>
<feature type="turn" evidence="16">
    <location>
        <begin position="633"/>
        <end position="636"/>
    </location>
</feature>
<feature type="strand" evidence="16">
    <location>
        <begin position="637"/>
        <end position="639"/>
    </location>
</feature>
<comment type="function">
    <text evidence="1 2 8">Transmembrane metalloprotease which mediates the ectodomain shedding of a myriad of transmembrane proteins, including adhesion proteins, growth factor precursors and cytokines being essential for development and tissue homeostasis. Associates with six members of the tetraspanin superfamily TspanC8 which regulate its exit from the endoplasmic reticulum and its substrate selectivity (By similarity). Cleaves the membrane-bound precursor of TNF-alpha at '76-Ala-|-Val-77' to its mature soluble form. Responsible for the proteolytical release of soluble JAM3 from endothelial cells surface (By similarity). Responsible for the proteolytic release of several other cell-surface proteins, including heparin-binding epidermal growth-like factor, ephrin-A2, CD44, CDH2 and for constitutive and regulated alpha-secretase cleavage of amyloid precursor protein (APP) (PubMed:10097139). Contributes to the normal cleavage of the cellular prion protein. Involved in the cleavage of the adhesion molecule L1 at the cell surface and in released membrane vesicles, suggesting a vesicle-based protease activity (By similarity). Also controls the proteolytic processing of Notch and mediates lateral inhibition during neurogenesis (By similarity). Required for the development of type 1 transitional B cells into marginal zone B cells, probably by cleaving Notch (By similarity). Responsible for the FasL ectodomain shedding and for the generation of the remnant ADAM10-processed FasL (FasL APL) transmembrane form. Also cleaves the ectodomain of the integral membrane proteins CORIN and ITM2B (By similarity). Mediates the proteolytic cleavage of LAG3, leading to release the secreted form of LAG3 (By similarity). Mediates the proteolytic cleavage of IL6R and IL11RA, leading to the release of secreted forms of IL6R and IL11RA (By similarity). Enhances the cleavage of CHL1 by BACE1 (By similarity). Cleaves NRCAM (By similarity). Cleaves TREM2, resulting in shedding of the TREM2 ectodomain (By similarity). Involved in the development and maturation of glomerular and coronary vasculature (By similarity). During development of the cochlear organ of Corti, promotes pillar cell separation by forming a ternary complex with CADH1 and EPHA4 and cleaving CADH1 at adherens junctions (By similarity). May regulate the EFNA5-EPHA3 signaling (By similarity). Regulates leukocyte transmigration as a sheddase for the adherens junction protein VE-cadherin/CDH5 in endothelial cells (By similarity).</text>
</comment>
<comment type="catalytic activity">
    <reaction evidence="1">
        <text>Endopeptidase of broad specificity.</text>
        <dbReference type="EC" id="3.4.24.81"/>
    </reaction>
</comment>
<comment type="cofactor">
    <cofactor evidence="1">
        <name>Zn(2+)</name>
        <dbReference type="ChEBI" id="CHEBI:29105"/>
    </cofactor>
    <text evidence="1">Binds 1 zinc ion per subunit.</text>
</comment>
<comment type="activity regulation">
    <text evidence="1 9">Catalytically inactive when the propeptide is intact and associated with the mature enzyme (PubMed:11481247). The disintegrin and cysteine-rich regions modulate access of substrates to exerts an inhibitory effect on the cleavage of ADAM10 substrates (By similarity).</text>
</comment>
<comment type="subunit">
    <text evidence="1 2 10 11">Forms a ternary EFNA5-EPHA3-ADAM10 complex mediating EFNA5 extracellular domain shedding by ADAM10 which regulates the EFNA5-EPHA3 complex internalization and function, the cleavage occurs in trans, with ADAM10 and its substrate being on the membranes of opposing cells (PubMed:16239146). Interacts with the clathrin adapter AP2 complex subunits AP2A1, AP2A2, AP2B1, and AP2M1; this interaction facilitates ADAM10 endocytosis from the plasma membrane during long-term potentiation in hippocampal neurons (By similarity). Forms a ternary complex composed of ADAM10, EPHA4 and CADH1; within the complex, ADAM10 cleaves CADH1 which disrupts adherens junctions (By similarity). Interacts with EPHA2 (By similarity). Interacts with NGF in a divalent cation-dependent manner. Interacts with TSPAN14; the interaction promotes ADAM10 maturation and cell surface expression. Interacts with TSPAN5, TSPAN10, TSPAN14, TSPAN15, TSPAN17 and TSPAN33; these interactions regulate ADAM10 substrate specificity, endocytosis and turnover (PubMed:23035126). Interacts (via extracellular domain) with TSPAN33 (via extracellular domain) and (via cytoplasmic domain) with AFDN; interaction with TSPAN33 allows the docking of ADAM10 to zonula adherens through a PDZ11-dependent interaction between TSPAN33 and PLEKHA7 while interaction with AFDN locks ADAM10 at zonula adherens (By similarity). Interacts with DLG1; this interaction recruits ADAM10 to the cell membrane during long-term depression in hippocampal neurons (By similarity). Interacts (via extracellular domain) with BACE1 (via extracellular domain) (By similarity). Interacts with FAM171A1 (By similarity).</text>
</comment>
<comment type="subcellular location">
    <subcellularLocation>
        <location evidence="8">Golgi apparatus membrane</location>
        <topology evidence="13">Single-pass type I membrane protein</topology>
    </subcellularLocation>
    <subcellularLocation>
        <location evidence="8 9">Cell membrane</location>
        <topology evidence="13">Single-pass type I membrane protein</topology>
    </subcellularLocation>
    <subcellularLocation>
        <location evidence="1">Cytoplasmic vesicle</location>
        <location evidence="1">Clathrin-coated vesicle</location>
    </subcellularLocation>
    <subcellularLocation>
        <location evidence="2">Cell projection</location>
        <location evidence="2">Axon</location>
    </subcellularLocation>
    <subcellularLocation>
        <location evidence="2">Cell projection</location>
        <location evidence="2">Dendrite</location>
    </subcellularLocation>
    <subcellularLocation>
        <location evidence="1">Cell junction</location>
        <location evidence="1">Adherens junction</location>
    </subcellularLocation>
    <subcellularLocation>
        <location evidence="1">Cytoplasm</location>
    </subcellularLocation>
    <text evidence="1 2">Is localized in the plasma membrane but is also expressed in the Golgi apparatus and in clathrin-coated vesicles derived likely from the Golgi (By similarity). During long term depression, it is recruited to the cell membrane by DLG1 (By similarity). The immature form is mainly located near cytoplasmic fibrillar structures, while the mature form is predominantly located at zonula adherens and the cell membrane (By similarity). The localization and clustering of mature ADAM10 to zonula adherens is regulated by AFDN, TSPAN33, PLEKHA7 and PDZD11 (By similarity).</text>
</comment>
<comment type="tissue specificity">
    <text>Expressed at low level in kidney, spleen, lung, adrenal, heart and peripheral nerve.</text>
</comment>
<comment type="induction">
    <text>By interleukin-1 alpha in nasal cartilage.</text>
</comment>
<comment type="domain">
    <text evidence="2 10">The Cys-rich region C-terminal to the disintegrin domain functions as a substrate-recognition module, it recognizes the EFNA5-EPHA3 Complex but not the individual proteins PubMed:16239146. Both Cys-rich and stalk region are necessary for interaction with TSPAN5, TSPAN10, TSPAN14, TSPAN17, TSPAN33 (By similarity). Stalk region is sufficient for interaction with TSPAN15 (By similarity).</text>
</comment>
<comment type="domain">
    <text evidence="3">The propeptide keeps the metalloprotease in a latent form via a cysteine switch mechanism. This mechanism may be mediated by a highly conserved cysteine (Cys-173) in the propeptide, which interacts and neutralizes the zinc-coordinating HEXGHXXGXXHD catalytic core of the metalloprotease domain. The dissociation of the cysteine from the zinc ion upon the activation-peptide release activates the enzyme.</text>
</comment>
<comment type="PTM">
    <text evidence="9">The precursor is cleaved by furin and PCSK7.</text>
</comment>
<sequence>MVLLRVLILLLSWVAGLGGQYGNPLNKYIRHYEGLSYDVDSLHQKHQRAKRAVSHEDQFLRLDFHAHGRHFNLRMKRDTSLFSEEFRVETSNAVLDYDTSHIYTGHIYGEEGSFSHGSVIDGRFEGFIQTHGGTFYVEPAERYIKDRTLPFHSVIYHEDDIKYPHKYGPQGGCADHSVFERMRKYQMTGVEEVTQTPQEKHAINGPELLRKKRTTVAEKNTCQLYIQTDHLFFKYYGTREAVIAQISSHVKAIDTIYQTTDFSGIRNISFMVKRIRINTTADEKDPTNPFRFPNIGVEKFLELNSEQNHDDYCLAYVFTDRDFDDGVLGLAWVGAPSGSSGGICEKSKLYSDGKKKSLNTGIITVQNYGSHVPPKVSHITFAHEVGHNFGSPHDSGTECTPGESKNLGQKENGNYIMYARATSGDKLNNNKFSLCSIRNISQVLEKKRNNCFVESGQPICGNGMVEQGEECDCGYSDQCKDECCYDANQPEGKKCKLKPGKQCSPSQGPCCTAHCAFKSKTEKCRDDSDCAKEGICNGITALCPASDPKPNFTDCNRHTQVCINGQCAGSICEKHGLEECTCASSDGKDDKELCHVCCMKKMEPSTCASTGSVQWNKYFLGRTITLQPGSPCNDFRGYCDVFMRCRLVDADGPLARLKKAIFSPELYENIAEWIVAYWWAVLLMGIALIMLMAGFIKICSVHTPSSNPKLPPPKPLPGTLKRRRPPQPIQQPQRQRPRESYQMGHMRR</sequence>
<dbReference type="EC" id="3.4.24.81" evidence="1"/>
<dbReference type="EMBL" id="Z21961">
    <property type="protein sequence ID" value="CAA79973.1"/>
    <property type="molecule type" value="mRNA"/>
</dbReference>
<dbReference type="EMBL" id="BC153863">
    <property type="protein sequence ID" value="AAI53864.1"/>
    <property type="molecule type" value="mRNA"/>
</dbReference>
<dbReference type="PIR" id="S66129">
    <property type="entry name" value="S66129"/>
</dbReference>
<dbReference type="RefSeq" id="NP_776921.1">
    <property type="nucleotide sequence ID" value="NM_174496.3"/>
</dbReference>
<dbReference type="PDB" id="2AO7">
    <property type="method" value="X-ray"/>
    <property type="resolution" value="2.90 A"/>
    <property type="chains" value="A=455-646"/>
</dbReference>
<dbReference type="PDB" id="5L0Q">
    <property type="method" value="X-ray"/>
    <property type="resolution" value="2.76 A"/>
    <property type="chains" value="A/D=455-646"/>
</dbReference>
<dbReference type="PDB" id="8GH4">
    <property type="method" value="X-ray"/>
    <property type="resolution" value="3.80 A"/>
    <property type="chains" value="E=455-646"/>
</dbReference>
<dbReference type="PDBsum" id="2AO7"/>
<dbReference type="PDBsum" id="5L0Q"/>
<dbReference type="PDBsum" id="8GH4"/>
<dbReference type="SMR" id="Q10741"/>
<dbReference type="DIP" id="DIP-48422N"/>
<dbReference type="FunCoup" id="Q10741">
    <property type="interactions" value="4424"/>
</dbReference>
<dbReference type="IntAct" id="Q10741">
    <property type="interactions" value="5"/>
</dbReference>
<dbReference type="STRING" id="9913.ENSBTAP00000056919"/>
<dbReference type="MEROPS" id="M12.210"/>
<dbReference type="GlyCosmos" id="Q10741">
    <property type="glycosylation" value="4 sites, No reported glycans"/>
</dbReference>
<dbReference type="GlyGen" id="Q10741">
    <property type="glycosylation" value="4 sites"/>
</dbReference>
<dbReference type="PaxDb" id="9913-ENSBTAP00000042110"/>
<dbReference type="PeptideAtlas" id="Q10741"/>
<dbReference type="ABCD" id="Q10741">
    <property type="antibodies" value="1 sequenced antibody"/>
</dbReference>
<dbReference type="Ensembl" id="ENSBTAT00000075105.2">
    <property type="protein sequence ID" value="ENSBTAP00000056919.1"/>
    <property type="gene ID" value="ENSBTAG00000005481.7"/>
</dbReference>
<dbReference type="GeneID" id="282132"/>
<dbReference type="KEGG" id="bta:282132"/>
<dbReference type="CTD" id="102"/>
<dbReference type="VEuPathDB" id="HostDB:ENSBTAG00000005481"/>
<dbReference type="VGNC" id="VGNC:25604">
    <property type="gene designation" value="ADAM10"/>
</dbReference>
<dbReference type="eggNOG" id="KOG3658">
    <property type="taxonomic scope" value="Eukaryota"/>
</dbReference>
<dbReference type="GeneTree" id="ENSGT00940000160579"/>
<dbReference type="HOGENOM" id="CLU_004602_0_0_1"/>
<dbReference type="InParanoid" id="Q10741"/>
<dbReference type="OMA" id="MAVFIRC"/>
<dbReference type="OrthoDB" id="2149267at2759"/>
<dbReference type="TreeFam" id="TF352021"/>
<dbReference type="Reactome" id="R-BTA-1474228">
    <property type="pathway name" value="Degradation of the extracellular matrix"/>
</dbReference>
<dbReference type="Reactome" id="R-BTA-381426">
    <property type="pathway name" value="Regulation of Insulin-like Growth Factor (IGF) transport and uptake by Insulin-like Growth Factor Binding Proteins (IGFBPs)"/>
</dbReference>
<dbReference type="Reactome" id="R-BTA-6798695">
    <property type="pathway name" value="Neutrophil degranulation"/>
</dbReference>
<dbReference type="Reactome" id="R-BTA-8957275">
    <property type="pathway name" value="Post-translational protein phosphorylation"/>
</dbReference>
<dbReference type="EvolutionaryTrace" id="Q10741"/>
<dbReference type="Proteomes" id="UP000009136">
    <property type="component" value="Chromosome 10"/>
</dbReference>
<dbReference type="Bgee" id="ENSBTAG00000005481">
    <property type="expression patterns" value="Expressed in conceptus and 111 other cell types or tissues"/>
</dbReference>
<dbReference type="GO" id="GO:0005912">
    <property type="term" value="C:adherens junction"/>
    <property type="evidence" value="ECO:0007669"/>
    <property type="project" value="UniProtKB-SubCell"/>
</dbReference>
<dbReference type="GO" id="GO:0030424">
    <property type="term" value="C:axon"/>
    <property type="evidence" value="ECO:0007669"/>
    <property type="project" value="UniProtKB-SubCell"/>
</dbReference>
<dbReference type="GO" id="GO:0009986">
    <property type="term" value="C:cell surface"/>
    <property type="evidence" value="ECO:0000250"/>
    <property type="project" value="UniProtKB"/>
</dbReference>
<dbReference type="GO" id="GO:0030136">
    <property type="term" value="C:clathrin-coated vesicle"/>
    <property type="evidence" value="ECO:0007669"/>
    <property type="project" value="UniProtKB-SubCell"/>
</dbReference>
<dbReference type="GO" id="GO:0005737">
    <property type="term" value="C:cytoplasm"/>
    <property type="evidence" value="ECO:0000250"/>
    <property type="project" value="UniProtKB"/>
</dbReference>
<dbReference type="GO" id="GO:0030425">
    <property type="term" value="C:dendrite"/>
    <property type="evidence" value="ECO:0007669"/>
    <property type="project" value="UniProtKB-SubCell"/>
</dbReference>
<dbReference type="GO" id="GO:0098978">
    <property type="term" value="C:glutamatergic synapse"/>
    <property type="evidence" value="ECO:0007669"/>
    <property type="project" value="Ensembl"/>
</dbReference>
<dbReference type="GO" id="GO:0005794">
    <property type="term" value="C:Golgi apparatus"/>
    <property type="evidence" value="ECO:0000250"/>
    <property type="project" value="UniProtKB"/>
</dbReference>
<dbReference type="GO" id="GO:0000139">
    <property type="term" value="C:Golgi membrane"/>
    <property type="evidence" value="ECO:0007669"/>
    <property type="project" value="UniProtKB-SubCell"/>
</dbReference>
<dbReference type="GO" id="GO:0005798">
    <property type="term" value="C:Golgi-associated vesicle"/>
    <property type="evidence" value="ECO:0000250"/>
    <property type="project" value="UniProtKB"/>
</dbReference>
<dbReference type="GO" id="GO:0005634">
    <property type="term" value="C:nucleus"/>
    <property type="evidence" value="ECO:0000250"/>
    <property type="project" value="UniProtKB"/>
</dbReference>
<dbReference type="GO" id="GO:0097038">
    <property type="term" value="C:perinuclear endoplasmic reticulum"/>
    <property type="evidence" value="ECO:0007669"/>
    <property type="project" value="Ensembl"/>
</dbReference>
<dbReference type="GO" id="GO:0005886">
    <property type="term" value="C:plasma membrane"/>
    <property type="evidence" value="ECO:0000318"/>
    <property type="project" value="GO_Central"/>
</dbReference>
<dbReference type="GO" id="GO:0046930">
    <property type="term" value="C:pore complex"/>
    <property type="evidence" value="ECO:0007669"/>
    <property type="project" value="Ensembl"/>
</dbReference>
<dbReference type="GO" id="GO:0014069">
    <property type="term" value="C:postsynaptic density"/>
    <property type="evidence" value="ECO:0007669"/>
    <property type="project" value="Ensembl"/>
</dbReference>
<dbReference type="GO" id="GO:0097060">
    <property type="term" value="C:synaptic membrane"/>
    <property type="evidence" value="ECO:0000318"/>
    <property type="project" value="GO_Central"/>
</dbReference>
<dbReference type="GO" id="GO:0097197">
    <property type="term" value="C:tetraspanin-enriched microdomain"/>
    <property type="evidence" value="ECO:0007669"/>
    <property type="project" value="Ensembl"/>
</dbReference>
<dbReference type="GO" id="GO:0004175">
    <property type="term" value="F:endopeptidase activity"/>
    <property type="evidence" value="ECO:0000250"/>
    <property type="project" value="UniProtKB"/>
</dbReference>
<dbReference type="GO" id="GO:0046872">
    <property type="term" value="F:metal ion binding"/>
    <property type="evidence" value="ECO:0007669"/>
    <property type="project" value="UniProtKB-KW"/>
</dbReference>
<dbReference type="GO" id="GO:0070573">
    <property type="term" value="F:metallodipeptidase activity"/>
    <property type="evidence" value="ECO:0007669"/>
    <property type="project" value="Ensembl"/>
</dbReference>
<dbReference type="GO" id="GO:0004222">
    <property type="term" value="F:metalloendopeptidase activity"/>
    <property type="evidence" value="ECO:0000314"/>
    <property type="project" value="ARUK-UCL"/>
</dbReference>
<dbReference type="GO" id="GO:1902945">
    <property type="term" value="F:metalloendopeptidase activity involved in amyloid precursor protein catabolic process"/>
    <property type="evidence" value="ECO:0000314"/>
    <property type="project" value="ARUK-UCL"/>
</dbReference>
<dbReference type="GO" id="GO:0008237">
    <property type="term" value="F:metallopeptidase activity"/>
    <property type="evidence" value="ECO:0000250"/>
    <property type="project" value="UniProtKB"/>
</dbReference>
<dbReference type="GO" id="GO:0042803">
    <property type="term" value="F:protein homodimerization activity"/>
    <property type="evidence" value="ECO:0000250"/>
    <property type="project" value="UniProtKB"/>
</dbReference>
<dbReference type="GO" id="GO:0019901">
    <property type="term" value="F:protein kinase binding"/>
    <property type="evidence" value="ECO:0000250"/>
    <property type="project" value="UniProtKB"/>
</dbReference>
<dbReference type="GO" id="GO:0017124">
    <property type="term" value="F:SH3 domain binding"/>
    <property type="evidence" value="ECO:0007669"/>
    <property type="project" value="UniProtKB-KW"/>
</dbReference>
<dbReference type="GO" id="GO:0034332">
    <property type="term" value="P:adherens junction organization"/>
    <property type="evidence" value="ECO:0007669"/>
    <property type="project" value="Ensembl"/>
</dbReference>
<dbReference type="GO" id="GO:0042987">
    <property type="term" value="P:amyloid precursor protein catabolic process"/>
    <property type="evidence" value="ECO:0000314"/>
    <property type="project" value="ARUK-UCL"/>
</dbReference>
<dbReference type="GO" id="GO:0090102">
    <property type="term" value="P:cochlea development"/>
    <property type="evidence" value="ECO:0007669"/>
    <property type="project" value="Ensembl"/>
</dbReference>
<dbReference type="GO" id="GO:0051089">
    <property type="term" value="P:constitutive protein ectodomain proteolysis"/>
    <property type="evidence" value="ECO:0007669"/>
    <property type="project" value="Ensembl"/>
</dbReference>
<dbReference type="GO" id="GO:0038004">
    <property type="term" value="P:epidermal growth factor receptor ligand maturation"/>
    <property type="evidence" value="ECO:0007669"/>
    <property type="project" value="Ensembl"/>
</dbReference>
<dbReference type="GO" id="GO:0001701">
    <property type="term" value="P:in utero embryonic development"/>
    <property type="evidence" value="ECO:0000250"/>
    <property type="project" value="UniProtKB"/>
</dbReference>
<dbReference type="GO" id="GO:0002315">
    <property type="term" value="P:marginal zone B cell differentiation"/>
    <property type="evidence" value="ECO:0007669"/>
    <property type="project" value="Ensembl"/>
</dbReference>
<dbReference type="GO" id="GO:0006509">
    <property type="term" value="P:membrane protein ectodomain proteolysis"/>
    <property type="evidence" value="ECO:0000250"/>
    <property type="project" value="UniProtKB"/>
</dbReference>
<dbReference type="GO" id="GO:0042117">
    <property type="term" value="P:monocyte activation"/>
    <property type="evidence" value="ECO:0007669"/>
    <property type="project" value="Ensembl"/>
</dbReference>
<dbReference type="GO" id="GO:0007162">
    <property type="term" value="P:negative regulation of cell adhesion"/>
    <property type="evidence" value="ECO:0000250"/>
    <property type="project" value="UniProtKB"/>
</dbReference>
<dbReference type="GO" id="GO:0010629">
    <property type="term" value="P:negative regulation of gene expression"/>
    <property type="evidence" value="ECO:0007669"/>
    <property type="project" value="Ensembl"/>
</dbReference>
<dbReference type="GO" id="GO:0007219">
    <property type="term" value="P:Notch signaling pathway"/>
    <property type="evidence" value="ECO:0000250"/>
    <property type="project" value="UniProtKB"/>
</dbReference>
<dbReference type="GO" id="GO:0046931">
    <property type="term" value="P:pore complex assembly"/>
    <property type="evidence" value="ECO:0007669"/>
    <property type="project" value="Ensembl"/>
</dbReference>
<dbReference type="GO" id="GO:0030307">
    <property type="term" value="P:positive regulation of cell growth"/>
    <property type="evidence" value="ECO:0007669"/>
    <property type="project" value="Ensembl"/>
</dbReference>
<dbReference type="GO" id="GO:0008284">
    <property type="term" value="P:positive regulation of cell population proliferation"/>
    <property type="evidence" value="ECO:0007669"/>
    <property type="project" value="Ensembl"/>
</dbReference>
<dbReference type="GO" id="GO:0010820">
    <property type="term" value="P:positive regulation of T cell chemotaxis"/>
    <property type="evidence" value="ECO:0007669"/>
    <property type="project" value="Ensembl"/>
</dbReference>
<dbReference type="GO" id="GO:0099173">
    <property type="term" value="P:postsynapse organization"/>
    <property type="evidence" value="ECO:0007669"/>
    <property type="project" value="Ensembl"/>
</dbReference>
<dbReference type="GO" id="GO:0140249">
    <property type="term" value="P:protein catabolic process at postsynapse"/>
    <property type="evidence" value="ECO:0007669"/>
    <property type="project" value="Ensembl"/>
</dbReference>
<dbReference type="GO" id="GO:0006468">
    <property type="term" value="P:protein phosphorylation"/>
    <property type="evidence" value="ECO:0000250"/>
    <property type="project" value="UniProtKB"/>
</dbReference>
<dbReference type="GO" id="GO:0016485">
    <property type="term" value="P:protein processing"/>
    <property type="evidence" value="ECO:0000314"/>
    <property type="project" value="ARUK-UCL"/>
</dbReference>
<dbReference type="GO" id="GO:0098696">
    <property type="term" value="P:regulation of neurotransmitter receptor localization to postsynaptic specialization membrane"/>
    <property type="evidence" value="ECO:0007669"/>
    <property type="project" value="Ensembl"/>
</dbReference>
<dbReference type="GO" id="GO:0008593">
    <property type="term" value="P:regulation of Notch signaling pathway"/>
    <property type="evidence" value="ECO:0007669"/>
    <property type="project" value="Ensembl"/>
</dbReference>
<dbReference type="GO" id="GO:0099175">
    <property type="term" value="P:regulation of postsynapse organization"/>
    <property type="evidence" value="ECO:0007669"/>
    <property type="project" value="Ensembl"/>
</dbReference>
<dbReference type="GO" id="GO:1901342">
    <property type="term" value="P:regulation of vasculature development"/>
    <property type="evidence" value="ECO:0007669"/>
    <property type="project" value="Ensembl"/>
</dbReference>
<dbReference type="GO" id="GO:0034612">
    <property type="term" value="P:response to tumor necrosis factor"/>
    <property type="evidence" value="ECO:0007669"/>
    <property type="project" value="Ensembl"/>
</dbReference>
<dbReference type="CDD" id="cd04270">
    <property type="entry name" value="ZnMc_TACE_like"/>
    <property type="match status" value="1"/>
</dbReference>
<dbReference type="FunFam" id="3.40.390.10:FF:000011">
    <property type="entry name" value="Disintegrin and metalloproteinase domain-containing protein 10"/>
    <property type="match status" value="1"/>
</dbReference>
<dbReference type="FunFam" id="4.10.70.10:FF:000002">
    <property type="entry name" value="disintegrin and metalloproteinase domain-containing protein 10"/>
    <property type="match status" value="1"/>
</dbReference>
<dbReference type="Gene3D" id="3.40.390.10">
    <property type="entry name" value="Collagenase (Catalytic Domain)"/>
    <property type="match status" value="1"/>
</dbReference>
<dbReference type="Gene3D" id="4.10.70.10">
    <property type="entry name" value="Disintegrin domain"/>
    <property type="match status" value="1"/>
</dbReference>
<dbReference type="InterPro" id="IPR034025">
    <property type="entry name" value="ADAM10_ADAM17"/>
</dbReference>
<dbReference type="InterPro" id="IPR049038">
    <property type="entry name" value="ADAM10_Cys-rich"/>
</dbReference>
<dbReference type="InterPro" id="IPR051489">
    <property type="entry name" value="ADAM_Metalloproteinase"/>
</dbReference>
<dbReference type="InterPro" id="IPR001762">
    <property type="entry name" value="Disintegrin_dom"/>
</dbReference>
<dbReference type="InterPro" id="IPR036436">
    <property type="entry name" value="Disintegrin_dom_sf"/>
</dbReference>
<dbReference type="InterPro" id="IPR024079">
    <property type="entry name" value="MetalloPept_cat_dom_sf"/>
</dbReference>
<dbReference type="InterPro" id="IPR001590">
    <property type="entry name" value="Peptidase_M12B"/>
</dbReference>
<dbReference type="PANTHER" id="PTHR45702">
    <property type="entry name" value="ADAM10/ADAM17 METALLOPEPTIDASE FAMILY MEMBER"/>
    <property type="match status" value="1"/>
</dbReference>
<dbReference type="PANTHER" id="PTHR45702:SF4">
    <property type="entry name" value="DISINTEGRIN AND METALLOPROTEINASE DOMAIN-CONTAINING PROTEIN 10"/>
    <property type="match status" value="1"/>
</dbReference>
<dbReference type="Pfam" id="PF21299">
    <property type="entry name" value="ADAM10_Cys-rich"/>
    <property type="match status" value="1"/>
</dbReference>
<dbReference type="Pfam" id="PF00200">
    <property type="entry name" value="Disintegrin"/>
    <property type="match status" value="1"/>
</dbReference>
<dbReference type="Pfam" id="PF13574">
    <property type="entry name" value="Reprolysin_2"/>
    <property type="match status" value="1"/>
</dbReference>
<dbReference type="SMART" id="SM00050">
    <property type="entry name" value="DISIN"/>
    <property type="match status" value="1"/>
</dbReference>
<dbReference type="SUPFAM" id="SSF57552">
    <property type="entry name" value="Blood coagulation inhibitor (disintegrin)"/>
    <property type="match status" value="1"/>
</dbReference>
<dbReference type="SUPFAM" id="SSF55486">
    <property type="entry name" value="Metalloproteases ('zincins'), catalytic domain"/>
    <property type="match status" value="1"/>
</dbReference>
<dbReference type="PROSITE" id="PS50215">
    <property type="entry name" value="ADAM_MEPRO"/>
    <property type="match status" value="1"/>
</dbReference>
<dbReference type="PROSITE" id="PS50214">
    <property type="entry name" value="DISINTEGRIN_2"/>
    <property type="match status" value="1"/>
</dbReference>
<dbReference type="PROSITE" id="PS00142">
    <property type="entry name" value="ZINC_PROTEASE"/>
    <property type="match status" value="1"/>
</dbReference>
<name>ADA10_BOVIN</name>
<reference key="1">
    <citation type="journal article" date="1996" name="Biochem. J.">
        <title>Molecular cloning of MADM: a catalytically active mammalian disintegrin-metalloprotease expressed in various cell types.</title>
        <authorList>
            <person name="Howard L."/>
            <person name="Mitchell S."/>
            <person name="Lu X."/>
            <person name="Griffiths S."/>
            <person name="Glynn P."/>
        </authorList>
    </citation>
    <scope>NUCLEOTIDE SEQUENCE [MRNA]</scope>
    <source>
        <tissue>Brain</tissue>
    </source>
</reference>
<reference key="2">
    <citation type="journal article" date="1999" name="Proc. Natl. Acad. Sci. U.S.A.">
        <title>Constitutive and regulated alpha-secretase cleavage of Alzheimer's amyloid precursor protein by a disintegrin metalloprotease.</title>
        <authorList>
            <person name="Lammich S."/>
            <person name="Kojro E."/>
            <person name="Postina R."/>
            <person name="Gilbert S."/>
            <person name="Pfeiffer R."/>
            <person name="Jasionowski M."/>
            <person name="Haass C."/>
            <person name="Fahrenholz F."/>
        </authorList>
    </citation>
    <scope>NUCLEOTIDE SEQUENCE [MRNA]</scope>
    <scope>PROTEIN SEQUENCE OF 214-233</scope>
    <scope>FUNCTION</scope>
    <scope>SUBCELLULAR LOCATION</scope>
    <scope>ACTIVE SITE</scope>
    <scope>MUTAGENESIS OF GLU-384</scope>
</reference>
<reference key="3">
    <citation type="submission" date="2007-09" db="EMBL/GenBank/DDBJ databases">
        <authorList>
            <consortium name="NIH - Mammalian Gene Collection (MGC) project"/>
        </authorList>
    </citation>
    <scope>NUCLEOTIDE SEQUENCE [LARGE SCALE MRNA]</scope>
    <source>
        <strain>Hereford</strain>
        <tissue>Basal ganglia</tissue>
    </source>
</reference>
<reference key="4">
    <citation type="journal article" date="2001" name="FASEB J.">
        <title>Regulation of the alpha-secretase ADAM10 by its prodomain and proprotein convertases.</title>
        <authorList>
            <person name="Anders A."/>
            <person name="Gilbert S."/>
            <person name="Garten W."/>
            <person name="Postina R."/>
            <person name="Fahrenholz F."/>
        </authorList>
    </citation>
    <scope>MUTAGENESIS OF 210-ARG--ARG-213</scope>
    <scope>SUBCELLULAR LOCATION</scope>
    <scope>CLEAVAGE</scope>
</reference>
<reference key="5">
    <citation type="journal article" date="2012" name="J. Biol. Chem.">
        <title>The TspanC8 subgroup of tetraspanins interacts with A disintegrin and metalloprotease 10 (ADAM10) and regulates its maturation and cell surface expression.</title>
        <authorList>
            <person name="Haining E.J."/>
            <person name="Yang J."/>
            <person name="Bailey R.L."/>
            <person name="Khan K."/>
            <person name="Collier R."/>
            <person name="Tsai S."/>
            <person name="Watson S.P."/>
            <person name="Frampton J."/>
            <person name="Garcia P."/>
            <person name="Tomlinson M.G."/>
        </authorList>
    </citation>
    <scope>INTERACTION WITH TSPAN5; TSPAN10; TSPAN14; TSPAN15; TSPAN17 AND TSPAN33</scope>
</reference>
<reference key="6">
    <citation type="journal article" date="2005" name="Cell">
        <title>Adam meets Eph: an ADAM substrate recognition module acts as a molecular switch for ephrin cleavage in trans.</title>
        <authorList>
            <person name="Janes P.W."/>
            <person name="Saha N."/>
            <person name="Barton W.A."/>
            <person name="Kolev M.V."/>
            <person name="Wimmer-Kleikamp S.H."/>
            <person name="Nievergall E."/>
            <person name="Blobel C.P."/>
            <person name="Himanen J.P."/>
            <person name="Lackmann M."/>
            <person name="Nikolov D.B."/>
        </authorList>
    </citation>
    <scope>X-RAY CRYSTALLOGRAPHY (2.9 ANGSTROMS) OF 455-646</scope>
    <scope>DISULFIDE BONDS</scope>
    <scope>SUBUNIT</scope>
    <scope>MUTAGENESIS OF GLU-573; GLU-578 AND GLU-579</scope>
</reference>
<reference evidence="15" key="7">
    <citation type="journal article" date="2016" name="J. Exp. Med.">
        <title>An activated form of ADAM10 is tumor selective and regulates cancer stem-like cells and tumor growth.</title>
        <authorList>
            <person name="Atapattu L."/>
            <person name="Saha N."/>
            <person name="Chheang C."/>
            <person name="Eissman M.F."/>
            <person name="Xu K."/>
            <person name="Vail M.E."/>
            <person name="Hii L."/>
            <person name="Llerena C."/>
            <person name="Liu Z."/>
            <person name="Horvay K."/>
            <person name="Abud H.E."/>
            <person name="Kusebauch U."/>
            <person name="Moritz R.L."/>
            <person name="Ding B.S."/>
            <person name="Cao Z."/>
            <person name="Rafii S."/>
            <person name="Ernst M."/>
            <person name="Scott A.M."/>
            <person name="Nikolov D.B."/>
            <person name="Lackmann M."/>
            <person name="Janes P.W."/>
        </authorList>
    </citation>
    <scope>X-RAY CRYSTALLOGRAPHY (2.76 ANGSTROMS) OF 455-646</scope>
    <scope>GLYCOSYLATION AT ASN-551</scope>
    <scope>DISULFIDE BONDS</scope>
</reference>
<keyword id="KW-0002">3D-structure</keyword>
<keyword id="KW-0965">Cell junction</keyword>
<keyword id="KW-1003">Cell membrane</keyword>
<keyword id="KW-0966">Cell projection</keyword>
<keyword id="KW-0165">Cleavage on pair of basic residues</keyword>
<keyword id="KW-0963">Cytoplasm</keyword>
<keyword id="KW-0968">Cytoplasmic vesicle</keyword>
<keyword id="KW-0903">Direct protein sequencing</keyword>
<keyword id="KW-1015">Disulfide bond</keyword>
<keyword id="KW-0325">Glycoprotein</keyword>
<keyword id="KW-0333">Golgi apparatus</keyword>
<keyword id="KW-0378">Hydrolase</keyword>
<keyword id="KW-0472">Membrane</keyword>
<keyword id="KW-0479">Metal-binding</keyword>
<keyword id="KW-0482">Metalloprotease</keyword>
<keyword id="KW-0914">Notch signaling pathway</keyword>
<keyword id="KW-0597">Phosphoprotein</keyword>
<keyword id="KW-0645">Protease</keyword>
<keyword id="KW-1185">Reference proteome</keyword>
<keyword id="KW-0729">SH3-binding</keyword>
<keyword id="KW-0732">Signal</keyword>
<keyword id="KW-0812">Transmembrane</keyword>
<keyword id="KW-1133">Transmembrane helix</keyword>
<keyword id="KW-0862">Zinc</keyword>
<keyword id="KW-0865">Zymogen</keyword>
<accession>Q10741</accession>
<accession>A8E663</accession>